<evidence type="ECO:0000250" key="1"/>
<evidence type="ECO:0000255" key="2"/>
<evidence type="ECO:0000255" key="3">
    <source>
        <dbReference type="PROSITE-ProRule" id="PRU01103"/>
    </source>
</evidence>
<evidence type="ECO:0000269" key="4">
    <source>
    </source>
</evidence>
<evidence type="ECO:0000269" key="5">
    <source>
    </source>
</evidence>
<evidence type="ECO:0000269" key="6">
    <source>
    </source>
</evidence>
<evidence type="ECO:0000305" key="7"/>
<evidence type="ECO:0000305" key="8">
    <source>
    </source>
</evidence>
<name>PAG1_SHEEP</name>
<reference key="1">
    <citation type="journal article" date="1991" name="Proc. Natl. Acad. Sci. U.S.A.">
        <title>Identification of the major pregnancy-specific antigens of cattle and sheep as inactive members of the aspartic proteinase family.</title>
        <authorList>
            <person name="Xie S."/>
            <person name="Low B.G."/>
            <person name="Nagel R.J."/>
            <person name="Kramer K.K."/>
            <person name="Anthony R.V."/>
            <person name="Zoli A.P."/>
            <person name="Beckers J.-F.M.P."/>
            <person name="Roberts R.M."/>
        </authorList>
    </citation>
    <scope>NUCLEOTIDE SEQUENCE [MRNA]</scope>
    <scope>ABSENCE OF CATALYTIC ACTIVITY</scope>
    <scope>SUBCELLULAR LOCATION</scope>
    <scope>TISSUE SPECIFICITY</scope>
    <scope>DEVELOPMENTAL STAGE</scope>
    <source>
        <tissue>Placenta</tissue>
    </source>
</reference>
<reference key="2">
    <citation type="journal article" date="2004" name="Reprod. Nutr. Dev.">
        <title>Isolation and characterization of eight pregnancy-associated glycoproteins present at high levels in the ovine placenta between day 60 and day 100 of gestation.</title>
        <authorList>
            <person name="El Amiri B."/>
            <person name="Remy B."/>
            <person name="De Sousa N.M."/>
            <person name="Beckers J.F."/>
        </authorList>
    </citation>
    <scope>PROTEIN SEQUENCE OF 54-63</scope>
    <scope>TISSUE SPECIFICITY</scope>
    <scope>DEVELOPMENTAL STAGE</scope>
    <source>
        <tissue>Fetal cotyledon</tissue>
    </source>
</reference>
<reference key="3">
    <citation type="journal article" date="2000" name="Biol. Reprod.">
        <title>Pregnancy-associated bovine and ovine glycoproteins exhibit spatially and temporally distinct expression patterns during pregnancy.</title>
        <authorList>
            <person name="Green J.A."/>
            <person name="Xie S."/>
            <person name="Quan X."/>
            <person name="Bao B."/>
            <person name="Gan X."/>
            <person name="Mathialagan N."/>
            <person name="Beckers J.F."/>
            <person name="Roberts R.M."/>
        </authorList>
    </citation>
    <scope>TISSUE SPECIFICITY</scope>
    <scope>DEVELOPMENTAL STAGE</scope>
</reference>
<comment type="function">
    <text>Has no proteolytic activity.</text>
</comment>
<comment type="subcellular location">
    <subcellularLocation>
        <location evidence="6">Secreted</location>
        <location evidence="6">Extracellular space</location>
    </subcellularLocation>
</comment>
<comment type="tissue specificity">
    <text evidence="4 5 6">Trophoblast and placental tissue. Produced specifically in the invasive binucleate cells of the placenta.</text>
</comment>
<comment type="developmental stage">
    <text evidence="4 5 6">Detected in maternal serum soon after implantation and throughout the gestation period.</text>
</comment>
<comment type="similarity">
    <text evidence="7">Belongs to the peptidase A1 family.</text>
</comment>
<comment type="caution">
    <text evidence="8">Lacks the conserved Asp active site at position 272.</text>
</comment>
<keyword id="KW-0903">Direct protein sequencing</keyword>
<keyword id="KW-1015">Disulfide bond</keyword>
<keyword id="KW-0325">Glycoprotein</keyword>
<keyword id="KW-1185">Reference proteome</keyword>
<keyword id="KW-0964">Secreted</keyword>
<keyword id="KW-0732">Signal</keyword>
<organism>
    <name type="scientific">Ovis aries</name>
    <name type="common">Sheep</name>
    <dbReference type="NCBI Taxonomy" id="9940"/>
    <lineage>
        <taxon>Eukaryota</taxon>
        <taxon>Metazoa</taxon>
        <taxon>Chordata</taxon>
        <taxon>Craniata</taxon>
        <taxon>Vertebrata</taxon>
        <taxon>Euteleostomi</taxon>
        <taxon>Mammalia</taxon>
        <taxon>Eutheria</taxon>
        <taxon>Laurasiatheria</taxon>
        <taxon>Artiodactyla</taxon>
        <taxon>Ruminantia</taxon>
        <taxon>Pecora</taxon>
        <taxon>Bovidae</taxon>
        <taxon>Caprinae</taxon>
        <taxon>Ovis</taxon>
    </lineage>
</organism>
<proteinExistence type="evidence at protein level"/>
<accession>Q28755</accession>
<accession>P83496</accession>
<feature type="signal peptide" evidence="2">
    <location>
        <begin position="1"/>
        <end position="15"/>
    </location>
</feature>
<feature type="propeptide" id="PRO_0000026109" description="Activation peptide" evidence="5">
    <location>
        <begin position="16"/>
        <end position="53"/>
    </location>
</feature>
<feature type="chain" id="PRO_0000026110" description="Pregnancy-associated glycoprotein 1">
    <location>
        <begin position="54"/>
        <end position="382"/>
    </location>
</feature>
<feature type="domain" description="Peptidase A1" evidence="3">
    <location>
        <begin position="71"/>
        <end position="379"/>
    </location>
</feature>
<feature type="site" description="Ancestral active site">
    <location>
        <position position="272"/>
    </location>
</feature>
<feature type="glycosylation site" description="N-linked (GlcNAc...) asparagine" evidence="2">
    <location>
        <position position="57"/>
    </location>
</feature>
<feature type="glycosylation site" description="N-linked (GlcNAc...) asparagine" evidence="2">
    <location>
        <position position="74"/>
    </location>
</feature>
<feature type="glycosylation site" description="N-linked (GlcNAc...) asparagine" evidence="2">
    <location>
        <position position="128"/>
    </location>
</feature>
<feature type="disulfide bond" evidence="1">
    <location>
        <begin position="102"/>
        <end position="110"/>
    </location>
</feature>
<feature type="disulfide bond" evidence="1">
    <location>
        <begin position="263"/>
        <end position="267"/>
    </location>
</feature>
<feature type="disulfide bond" evidence="1">
    <location>
        <begin position="305"/>
        <end position="339"/>
    </location>
</feature>
<dbReference type="EMBL" id="M73961">
    <property type="protein sequence ID" value="AAB53144.1"/>
    <property type="molecule type" value="mRNA"/>
</dbReference>
<dbReference type="PIR" id="A41545">
    <property type="entry name" value="A41545"/>
</dbReference>
<dbReference type="SMR" id="Q28755"/>
<dbReference type="STRING" id="9940.ENSOARP00000005629"/>
<dbReference type="PaxDb" id="9940-ENSOARP00000005629"/>
<dbReference type="eggNOG" id="KOG1339">
    <property type="taxonomic scope" value="Eukaryota"/>
</dbReference>
<dbReference type="Proteomes" id="UP000002356">
    <property type="component" value="Unplaced"/>
</dbReference>
<dbReference type="GO" id="GO:0005576">
    <property type="term" value="C:extracellular region"/>
    <property type="evidence" value="ECO:0007669"/>
    <property type="project" value="UniProtKB-SubCell"/>
</dbReference>
<dbReference type="GO" id="GO:0004190">
    <property type="term" value="F:aspartic-type endopeptidase activity"/>
    <property type="evidence" value="ECO:0007669"/>
    <property type="project" value="InterPro"/>
</dbReference>
<dbReference type="GO" id="GO:0006508">
    <property type="term" value="P:proteolysis"/>
    <property type="evidence" value="ECO:0007669"/>
    <property type="project" value="InterPro"/>
</dbReference>
<dbReference type="FunFam" id="2.40.70.10:FF:000006">
    <property type="entry name" value="Cathepsin E"/>
    <property type="match status" value="1"/>
</dbReference>
<dbReference type="FunFam" id="2.40.70.10:FF:000004">
    <property type="entry name" value="Pepsin A"/>
    <property type="match status" value="1"/>
</dbReference>
<dbReference type="Gene3D" id="6.10.140.60">
    <property type="match status" value="1"/>
</dbReference>
<dbReference type="Gene3D" id="2.40.70.10">
    <property type="entry name" value="Acid Proteases"/>
    <property type="match status" value="2"/>
</dbReference>
<dbReference type="InterPro" id="IPR001461">
    <property type="entry name" value="Aspartic_peptidase_A1"/>
</dbReference>
<dbReference type="InterPro" id="IPR001969">
    <property type="entry name" value="Aspartic_peptidase_AS"/>
</dbReference>
<dbReference type="InterPro" id="IPR012848">
    <property type="entry name" value="Aspartic_peptidase_N"/>
</dbReference>
<dbReference type="InterPro" id="IPR033121">
    <property type="entry name" value="PEPTIDASE_A1"/>
</dbReference>
<dbReference type="InterPro" id="IPR021109">
    <property type="entry name" value="Peptidase_aspartic_dom_sf"/>
</dbReference>
<dbReference type="PANTHER" id="PTHR47966">
    <property type="entry name" value="BETA-SITE APP-CLEAVING ENZYME, ISOFORM A-RELATED"/>
    <property type="match status" value="1"/>
</dbReference>
<dbReference type="PANTHER" id="PTHR47966:SF49">
    <property type="entry name" value="PEPSIN A-5"/>
    <property type="match status" value="1"/>
</dbReference>
<dbReference type="Pfam" id="PF07966">
    <property type="entry name" value="A1_Propeptide"/>
    <property type="match status" value="1"/>
</dbReference>
<dbReference type="Pfam" id="PF00026">
    <property type="entry name" value="Asp"/>
    <property type="match status" value="1"/>
</dbReference>
<dbReference type="PRINTS" id="PR00792">
    <property type="entry name" value="PEPSIN"/>
</dbReference>
<dbReference type="SUPFAM" id="SSF50630">
    <property type="entry name" value="Acid proteases"/>
    <property type="match status" value="1"/>
</dbReference>
<dbReference type="PROSITE" id="PS00141">
    <property type="entry name" value="ASP_PROTEASE"/>
    <property type="match status" value="1"/>
</dbReference>
<dbReference type="PROSITE" id="PS51767">
    <property type="entry name" value="PEPTIDASE_A1"/>
    <property type="match status" value="1"/>
</dbReference>
<sequence length="382" mass="42980">MKWLVLLGLVAFSECIVKIPLRRVKTMRNTLSGKKMLNSFLKEHAYRLSQISFRASNLTIHPLRNIMDMLYVGNITIGTPPQEFQVVFDTGSSDLLVPSINCLSPTKRPCSKQDKFKHHQSSTFRFTNDTFRIYFGSGTMRGFVAHDTVRIGDLVSTDQPFGLIFLESWLDIPFDGILGLNYPKISFSGAIPIFDKLKNEGAFSEPVFAFYLNKDKQEGSVVMFGGVDHRYYKGELNWVPLIHPGEWSIPLDRISMRRKVIACSGGCEALVGTGTSLILGPRTVVENIQKHIGATQQCFEYFVSCSAVYALPSIVFTINGINYPVPPQAYLVKDSRGQCYSPFQVNRANPSAENWILGDVFLRRYFSVFDRGNDRIGLARAV</sequence>
<protein>
    <recommendedName>
        <fullName>Pregnancy-associated glycoprotein 1</fullName>
        <shortName>PAG 1</shortName>
    </recommendedName>
    <alternativeName>
        <fullName>Inactive aspartic protease PAG-1</fullName>
    </alternativeName>
    <alternativeName>
        <fullName>Pregnancy-associated glycoprotein 66d</fullName>
        <shortName>ovPAG 66d</shortName>
    </alternativeName>
</protein>